<accession>Q1CFR8</accession>
<accession>C4GWK5</accession>
<protein>
    <recommendedName>
        <fullName evidence="1">Betaine aldehyde dehydrogenase</fullName>
        <shortName evidence="1">BADH</shortName>
        <ecNumber evidence="1">1.2.1.8</ecNumber>
    </recommendedName>
</protein>
<feature type="chain" id="PRO_1000047062" description="Betaine aldehyde dehydrogenase">
    <location>
        <begin position="1"/>
        <end position="490"/>
    </location>
</feature>
<feature type="active site" description="Charge relay system" evidence="1">
    <location>
        <position position="162"/>
    </location>
</feature>
<feature type="active site" description="Proton acceptor" evidence="1">
    <location>
        <position position="252"/>
    </location>
</feature>
<feature type="active site" description="Nucleophile" evidence="1">
    <location>
        <position position="286"/>
    </location>
</feature>
<feature type="active site" description="Charge relay system" evidence="1">
    <location>
        <position position="464"/>
    </location>
</feature>
<feature type="binding site" evidence="1">
    <location>
        <position position="93"/>
    </location>
    <ligand>
        <name>K(+)</name>
        <dbReference type="ChEBI" id="CHEBI:29103"/>
        <label>1</label>
    </ligand>
</feature>
<feature type="binding site" evidence="1">
    <location>
        <begin position="150"/>
        <end position="152"/>
    </location>
    <ligand>
        <name>NAD(+)</name>
        <dbReference type="ChEBI" id="CHEBI:57540"/>
    </ligand>
</feature>
<feature type="binding site" evidence="1">
    <location>
        <begin position="176"/>
        <end position="179"/>
    </location>
    <ligand>
        <name>NAD(+)</name>
        <dbReference type="ChEBI" id="CHEBI:57540"/>
    </ligand>
</feature>
<feature type="binding site" evidence="1">
    <location>
        <position position="180"/>
    </location>
    <ligand>
        <name>K(+)</name>
        <dbReference type="ChEBI" id="CHEBI:29103"/>
        <label>1</label>
    </ligand>
</feature>
<feature type="binding site" evidence="1">
    <location>
        <begin position="230"/>
        <end position="233"/>
    </location>
    <ligand>
        <name>NAD(+)</name>
        <dbReference type="ChEBI" id="CHEBI:57540"/>
    </ligand>
</feature>
<feature type="binding site" evidence="1">
    <location>
        <position position="246"/>
    </location>
    <ligand>
        <name>K(+)</name>
        <dbReference type="ChEBI" id="CHEBI:29103"/>
        <label>2</label>
    </ligand>
</feature>
<feature type="binding site" evidence="1">
    <location>
        <position position="254"/>
    </location>
    <ligand>
        <name>NAD(+)</name>
        <dbReference type="ChEBI" id="CHEBI:57540"/>
    </ligand>
</feature>
<feature type="binding site" description="covalent" evidence="1">
    <location>
        <position position="286"/>
    </location>
    <ligand>
        <name>NAD(+)</name>
        <dbReference type="ChEBI" id="CHEBI:57540"/>
    </ligand>
</feature>
<feature type="binding site" evidence="1">
    <location>
        <position position="387"/>
    </location>
    <ligand>
        <name>NAD(+)</name>
        <dbReference type="ChEBI" id="CHEBI:57540"/>
    </ligand>
</feature>
<feature type="binding site" evidence="1">
    <location>
        <position position="457"/>
    </location>
    <ligand>
        <name>K(+)</name>
        <dbReference type="ChEBI" id="CHEBI:29103"/>
        <label>2</label>
    </ligand>
</feature>
<feature type="binding site" evidence="1">
    <location>
        <position position="460"/>
    </location>
    <ligand>
        <name>K(+)</name>
        <dbReference type="ChEBI" id="CHEBI:29103"/>
        <label>2</label>
    </ligand>
</feature>
<feature type="site" description="Seems to be a necessary countercharge to the potassium cations" evidence="1">
    <location>
        <position position="248"/>
    </location>
</feature>
<feature type="modified residue" description="Cysteine sulfenic acid (-SOH)" evidence="1">
    <location>
        <position position="286"/>
    </location>
</feature>
<proteinExistence type="inferred from homology"/>
<sequence length="490" mass="52596">MSRYGLQKLYINGAYTDSTSGDTFDAVNPANGECIAQLQAANAQDVDKAVAAAKQGQPVWAAMTAMERSRILRRAVDILRDRNDELAAIETADTGKPLSETRSVDIVTGADVLEYYAGLIPALEGQQIPLRGSAFVYTRREPLGVVAGIGAWNYPLQIALWKSAPALAAGNAMIFKPSEVTSLTALKLAGIYTEAGLPAGVFNVLTGSGDQVGQMLTEHPGIAKVSFTGGIASGKKVMANAAGSTLKDVTMELGGKSPLIIFADADLDKAADIAMMANFYSSGQVCTNGTRVFVPQALQAAFEQKIVERVKRIHIGDPSDERTNFGPLVSFQHRDSVMRYIDSGKREGATLLIGGYSLTEGALAHGAYVAPTVFTHCRDDMQIVREEIFGPVMSILSYQSEEEVIRRANDTEYGLAAGVVTQDLNRAHRVIHQLQAGICWINTWGESAPEMPVGGYKHSGVGRENGISTLEHYTQIKSIQVELGSFNSVF</sequence>
<evidence type="ECO:0000255" key="1">
    <source>
        <dbReference type="HAMAP-Rule" id="MF_00804"/>
    </source>
</evidence>
<gene>
    <name evidence="1" type="primary">betB</name>
    <name type="ordered locus">YPN_2835</name>
    <name type="ORF">YP516_3205</name>
</gene>
<organism>
    <name type="scientific">Yersinia pestis bv. Antiqua (strain Nepal516)</name>
    <dbReference type="NCBI Taxonomy" id="377628"/>
    <lineage>
        <taxon>Bacteria</taxon>
        <taxon>Pseudomonadati</taxon>
        <taxon>Pseudomonadota</taxon>
        <taxon>Gammaproteobacteria</taxon>
        <taxon>Enterobacterales</taxon>
        <taxon>Yersiniaceae</taxon>
        <taxon>Yersinia</taxon>
    </lineage>
</organism>
<comment type="function">
    <text evidence="1">Involved in the biosynthesis of the osmoprotectant glycine betaine. Catalyzes the irreversible oxidation of betaine aldehyde to the corresponding acid.</text>
</comment>
<comment type="catalytic activity">
    <reaction evidence="1">
        <text>betaine aldehyde + NAD(+) + H2O = glycine betaine + NADH + 2 H(+)</text>
        <dbReference type="Rhea" id="RHEA:15305"/>
        <dbReference type="ChEBI" id="CHEBI:15377"/>
        <dbReference type="ChEBI" id="CHEBI:15378"/>
        <dbReference type="ChEBI" id="CHEBI:15710"/>
        <dbReference type="ChEBI" id="CHEBI:17750"/>
        <dbReference type="ChEBI" id="CHEBI:57540"/>
        <dbReference type="ChEBI" id="CHEBI:57945"/>
        <dbReference type="EC" id="1.2.1.8"/>
    </reaction>
    <physiologicalReaction direction="left-to-right" evidence="1">
        <dbReference type="Rhea" id="RHEA:15306"/>
    </physiologicalReaction>
</comment>
<comment type="cofactor">
    <cofactor evidence="1">
        <name>K(+)</name>
        <dbReference type="ChEBI" id="CHEBI:29103"/>
    </cofactor>
    <text evidence="1">Binds 2 potassium ions per subunit.</text>
</comment>
<comment type="pathway">
    <text evidence="1">Amine and polyamine biosynthesis; betaine biosynthesis via choline pathway; betaine from betaine aldehyde: step 1/1.</text>
</comment>
<comment type="subunit">
    <text evidence="1">Dimer of dimers.</text>
</comment>
<comment type="similarity">
    <text evidence="1">Belongs to the aldehyde dehydrogenase family.</text>
</comment>
<dbReference type="EC" id="1.2.1.8" evidence="1"/>
<dbReference type="EMBL" id="CP000305">
    <property type="protein sequence ID" value="ABG19162.1"/>
    <property type="molecule type" value="Genomic_DNA"/>
</dbReference>
<dbReference type="EMBL" id="ACNQ01000017">
    <property type="protein sequence ID" value="EEO75305.1"/>
    <property type="molecule type" value="Genomic_DNA"/>
</dbReference>
<dbReference type="RefSeq" id="WP_002218281.1">
    <property type="nucleotide sequence ID" value="NZ_ACNQ01000017.1"/>
</dbReference>
<dbReference type="SMR" id="Q1CFR8"/>
<dbReference type="GeneID" id="57977305"/>
<dbReference type="KEGG" id="ypn:YPN_2835"/>
<dbReference type="HOGENOM" id="CLU_005391_0_1_6"/>
<dbReference type="UniPathway" id="UPA00529">
    <property type="reaction ID" value="UER00386"/>
</dbReference>
<dbReference type="Proteomes" id="UP000008936">
    <property type="component" value="Chromosome"/>
</dbReference>
<dbReference type="GO" id="GO:0008802">
    <property type="term" value="F:betaine-aldehyde dehydrogenase (NAD+) activity"/>
    <property type="evidence" value="ECO:0007669"/>
    <property type="project" value="UniProtKB-UniRule"/>
</dbReference>
<dbReference type="GO" id="GO:0046872">
    <property type="term" value="F:metal ion binding"/>
    <property type="evidence" value="ECO:0007669"/>
    <property type="project" value="UniProtKB-KW"/>
</dbReference>
<dbReference type="GO" id="GO:0019285">
    <property type="term" value="P:glycine betaine biosynthetic process from choline"/>
    <property type="evidence" value="ECO:0007669"/>
    <property type="project" value="UniProtKB-UniRule"/>
</dbReference>
<dbReference type="CDD" id="cd07090">
    <property type="entry name" value="ALDH_F9_TMBADH"/>
    <property type="match status" value="1"/>
</dbReference>
<dbReference type="FunFam" id="3.40.309.10:FF:000014">
    <property type="entry name" value="NAD/NADP-dependent betaine aldehyde dehydrogenase"/>
    <property type="match status" value="1"/>
</dbReference>
<dbReference type="FunFam" id="3.40.605.10:FF:000007">
    <property type="entry name" value="NAD/NADP-dependent betaine aldehyde dehydrogenase"/>
    <property type="match status" value="1"/>
</dbReference>
<dbReference type="Gene3D" id="3.40.605.10">
    <property type="entry name" value="Aldehyde Dehydrogenase, Chain A, domain 1"/>
    <property type="match status" value="1"/>
</dbReference>
<dbReference type="Gene3D" id="3.40.309.10">
    <property type="entry name" value="Aldehyde Dehydrogenase, Chain A, domain 2"/>
    <property type="match status" value="1"/>
</dbReference>
<dbReference type="HAMAP" id="MF_00804">
    <property type="entry name" value="BADH"/>
    <property type="match status" value="1"/>
</dbReference>
<dbReference type="InterPro" id="IPR016161">
    <property type="entry name" value="Ald_DH/histidinol_DH"/>
</dbReference>
<dbReference type="InterPro" id="IPR016163">
    <property type="entry name" value="Ald_DH_C"/>
</dbReference>
<dbReference type="InterPro" id="IPR016160">
    <property type="entry name" value="Ald_DH_CS_CYS"/>
</dbReference>
<dbReference type="InterPro" id="IPR029510">
    <property type="entry name" value="Ald_DH_CS_GLU"/>
</dbReference>
<dbReference type="InterPro" id="IPR016162">
    <property type="entry name" value="Ald_DH_N"/>
</dbReference>
<dbReference type="InterPro" id="IPR015590">
    <property type="entry name" value="Aldehyde_DH_dom"/>
</dbReference>
<dbReference type="InterPro" id="IPR011264">
    <property type="entry name" value="BADH"/>
</dbReference>
<dbReference type="NCBIfam" id="TIGR01804">
    <property type="entry name" value="BADH"/>
    <property type="match status" value="1"/>
</dbReference>
<dbReference type="NCBIfam" id="NF009725">
    <property type="entry name" value="PRK13252.1"/>
    <property type="match status" value="1"/>
</dbReference>
<dbReference type="PANTHER" id="PTHR11699">
    <property type="entry name" value="ALDEHYDE DEHYDROGENASE-RELATED"/>
    <property type="match status" value="1"/>
</dbReference>
<dbReference type="Pfam" id="PF00171">
    <property type="entry name" value="Aldedh"/>
    <property type="match status" value="1"/>
</dbReference>
<dbReference type="SUPFAM" id="SSF53720">
    <property type="entry name" value="ALDH-like"/>
    <property type="match status" value="1"/>
</dbReference>
<dbReference type="PROSITE" id="PS00070">
    <property type="entry name" value="ALDEHYDE_DEHYDR_CYS"/>
    <property type="match status" value="1"/>
</dbReference>
<dbReference type="PROSITE" id="PS00687">
    <property type="entry name" value="ALDEHYDE_DEHYDR_GLU"/>
    <property type="match status" value="1"/>
</dbReference>
<reference key="1">
    <citation type="journal article" date="2006" name="J. Bacteriol.">
        <title>Complete genome sequence of Yersinia pestis strains Antiqua and Nepal516: evidence of gene reduction in an emerging pathogen.</title>
        <authorList>
            <person name="Chain P.S.G."/>
            <person name="Hu P."/>
            <person name="Malfatti S.A."/>
            <person name="Radnedge L."/>
            <person name="Larimer F."/>
            <person name="Vergez L.M."/>
            <person name="Worsham P."/>
            <person name="Chu M.C."/>
            <person name="Andersen G.L."/>
        </authorList>
    </citation>
    <scope>NUCLEOTIDE SEQUENCE [LARGE SCALE GENOMIC DNA]</scope>
    <source>
        <strain>Nepal516</strain>
    </source>
</reference>
<reference key="2">
    <citation type="submission" date="2009-04" db="EMBL/GenBank/DDBJ databases">
        <title>Yersinia pestis Nepal516A whole genome shotgun sequencing project.</title>
        <authorList>
            <person name="Plunkett G. III"/>
            <person name="Anderson B.D."/>
            <person name="Baumler D.J."/>
            <person name="Burland V."/>
            <person name="Cabot E.L."/>
            <person name="Glasner J.D."/>
            <person name="Mau B."/>
            <person name="Neeno-Eckwall E."/>
            <person name="Perna N.T."/>
            <person name="Munk A.C."/>
            <person name="Tapia R."/>
            <person name="Green L.D."/>
            <person name="Rogers Y.C."/>
            <person name="Detter J.C."/>
            <person name="Bruce D.C."/>
            <person name="Brettin T.S."/>
        </authorList>
    </citation>
    <scope>NUCLEOTIDE SEQUENCE [LARGE SCALE GENOMIC DNA]</scope>
    <source>
        <strain>Nepal516</strain>
    </source>
</reference>
<keyword id="KW-0479">Metal-binding</keyword>
<keyword id="KW-0520">NAD</keyword>
<keyword id="KW-0521">NADP</keyword>
<keyword id="KW-0558">Oxidation</keyword>
<keyword id="KW-0560">Oxidoreductase</keyword>
<keyword id="KW-0630">Potassium</keyword>
<name>BETB_YERPN</name>